<protein>
    <recommendedName>
        <fullName evidence="1">Fluoride-specific ion channel FluC</fullName>
    </recommendedName>
</protein>
<keyword id="KW-1003">Cell membrane</keyword>
<keyword id="KW-0407">Ion channel</keyword>
<keyword id="KW-0406">Ion transport</keyword>
<keyword id="KW-0472">Membrane</keyword>
<keyword id="KW-0479">Metal-binding</keyword>
<keyword id="KW-1185">Reference proteome</keyword>
<keyword id="KW-0915">Sodium</keyword>
<keyword id="KW-0812">Transmembrane</keyword>
<keyword id="KW-1133">Transmembrane helix</keyword>
<keyword id="KW-0813">Transport</keyword>
<proteinExistence type="inferred from homology"/>
<comment type="function">
    <text evidence="1">Fluoride-specific ion channel. Important for reducing fluoride concentration in the cell, thus reducing its toxicity.</text>
</comment>
<comment type="catalytic activity">
    <reaction evidence="1">
        <text>fluoride(in) = fluoride(out)</text>
        <dbReference type="Rhea" id="RHEA:76159"/>
        <dbReference type="ChEBI" id="CHEBI:17051"/>
    </reaction>
    <physiologicalReaction direction="left-to-right" evidence="1">
        <dbReference type="Rhea" id="RHEA:76160"/>
    </physiologicalReaction>
</comment>
<comment type="activity regulation">
    <text evidence="1">Na(+) is not transported, but it plays an essential structural role and its presence is essential for fluoride channel function.</text>
</comment>
<comment type="subcellular location">
    <subcellularLocation>
        <location evidence="1">Cell membrane</location>
        <topology evidence="1">Multi-pass membrane protein</topology>
    </subcellularLocation>
</comment>
<comment type="similarity">
    <text evidence="1">Belongs to the fluoride channel Fluc/FEX (TC 1.A.43) family.</text>
</comment>
<feature type="chain" id="PRO_0000110145" description="Fluoride-specific ion channel FluC">
    <location>
        <begin position="1"/>
        <end position="129"/>
    </location>
</feature>
<feature type="transmembrane region" description="Helical" evidence="1">
    <location>
        <begin position="4"/>
        <end position="24"/>
    </location>
</feature>
<feature type="transmembrane region" description="Helical" evidence="1">
    <location>
        <begin position="30"/>
        <end position="50"/>
    </location>
</feature>
<feature type="transmembrane region" description="Helical" evidence="1">
    <location>
        <begin position="63"/>
        <end position="83"/>
    </location>
</feature>
<feature type="transmembrane region" description="Helical" evidence="1">
    <location>
        <begin position="95"/>
        <end position="115"/>
    </location>
</feature>
<feature type="binding site" evidence="1">
    <location>
        <position position="73"/>
    </location>
    <ligand>
        <name>Na(+)</name>
        <dbReference type="ChEBI" id="CHEBI:29101"/>
        <note>structural</note>
    </ligand>
</feature>
<feature type="binding site" evidence="1">
    <location>
        <position position="76"/>
    </location>
    <ligand>
        <name>Na(+)</name>
        <dbReference type="ChEBI" id="CHEBI:29101"/>
        <note>structural</note>
    </ligand>
</feature>
<name>FLUC_OCEIH</name>
<reference key="1">
    <citation type="journal article" date="2002" name="Nucleic Acids Res.">
        <title>Genome sequence of Oceanobacillus iheyensis isolated from the Iheya Ridge and its unexpected adaptive capabilities to extreme environments.</title>
        <authorList>
            <person name="Takami H."/>
            <person name="Takaki Y."/>
            <person name="Uchiyama I."/>
        </authorList>
    </citation>
    <scope>NUCLEOTIDE SEQUENCE [LARGE SCALE GENOMIC DNA]</scope>
    <source>
        <strain>DSM 14371 / CIP 107618 / JCM 11309 / KCTC 3954 / HTE831</strain>
    </source>
</reference>
<gene>
    <name evidence="1" type="primary">fluC</name>
    <name evidence="1" type="synonym">crcB</name>
    <name type="ordered locus">OB2718</name>
</gene>
<organism>
    <name type="scientific">Oceanobacillus iheyensis (strain DSM 14371 / CIP 107618 / JCM 11309 / KCTC 3954 / HTE831)</name>
    <dbReference type="NCBI Taxonomy" id="221109"/>
    <lineage>
        <taxon>Bacteria</taxon>
        <taxon>Bacillati</taxon>
        <taxon>Bacillota</taxon>
        <taxon>Bacilli</taxon>
        <taxon>Bacillales</taxon>
        <taxon>Bacillaceae</taxon>
        <taxon>Oceanobacillus</taxon>
    </lineage>
</organism>
<evidence type="ECO:0000255" key="1">
    <source>
        <dbReference type="HAMAP-Rule" id="MF_00454"/>
    </source>
</evidence>
<sequence length="129" mass="14227">MRNVLIVMLGGFIGANLRYWLGEWMSSSSGFPTGTFVINAIGCFLLGWLLTYSEKNRLLSKEWSLLLGTGLIGSFTTFSTFSVETLLLIESAKYIVASLYVFGSIFLGIGLAYIGVRLALYCKKEEDIA</sequence>
<dbReference type="EMBL" id="BA000028">
    <property type="protein sequence ID" value="BAC14674.1"/>
    <property type="molecule type" value="Genomic_DNA"/>
</dbReference>
<dbReference type="RefSeq" id="WP_011067112.1">
    <property type="nucleotide sequence ID" value="NC_004193.1"/>
</dbReference>
<dbReference type="SMR" id="Q8EMX2"/>
<dbReference type="KEGG" id="oih:OB2718"/>
<dbReference type="eggNOG" id="COG0239">
    <property type="taxonomic scope" value="Bacteria"/>
</dbReference>
<dbReference type="HOGENOM" id="CLU_114342_1_2_9"/>
<dbReference type="OrthoDB" id="9799631at2"/>
<dbReference type="PhylomeDB" id="Q8EMX2"/>
<dbReference type="Proteomes" id="UP000000822">
    <property type="component" value="Chromosome"/>
</dbReference>
<dbReference type="GO" id="GO:0005886">
    <property type="term" value="C:plasma membrane"/>
    <property type="evidence" value="ECO:0007669"/>
    <property type="project" value="UniProtKB-SubCell"/>
</dbReference>
<dbReference type="GO" id="GO:0062054">
    <property type="term" value="F:fluoride channel activity"/>
    <property type="evidence" value="ECO:0007669"/>
    <property type="project" value="UniProtKB-UniRule"/>
</dbReference>
<dbReference type="GO" id="GO:0046872">
    <property type="term" value="F:metal ion binding"/>
    <property type="evidence" value="ECO:0007669"/>
    <property type="project" value="UniProtKB-KW"/>
</dbReference>
<dbReference type="GO" id="GO:0140114">
    <property type="term" value="P:cellular detoxification of fluoride"/>
    <property type="evidence" value="ECO:0007669"/>
    <property type="project" value="UniProtKB-UniRule"/>
</dbReference>
<dbReference type="HAMAP" id="MF_00454">
    <property type="entry name" value="FluC"/>
    <property type="match status" value="1"/>
</dbReference>
<dbReference type="InterPro" id="IPR003691">
    <property type="entry name" value="FluC"/>
</dbReference>
<dbReference type="NCBIfam" id="TIGR00494">
    <property type="entry name" value="crcB"/>
    <property type="match status" value="1"/>
</dbReference>
<dbReference type="PANTHER" id="PTHR28259">
    <property type="entry name" value="FLUORIDE EXPORT PROTEIN 1-RELATED"/>
    <property type="match status" value="1"/>
</dbReference>
<dbReference type="PANTHER" id="PTHR28259:SF1">
    <property type="entry name" value="FLUORIDE EXPORT PROTEIN 1-RELATED"/>
    <property type="match status" value="1"/>
</dbReference>
<dbReference type="Pfam" id="PF02537">
    <property type="entry name" value="CRCB"/>
    <property type="match status" value="1"/>
</dbReference>
<accession>Q8EMX2</accession>